<accession>Q61712</accession>
<name>DNJC1_MOUSE</name>
<feature type="signal peptide" evidence="3">
    <location>
        <begin position="1"/>
        <end position="43"/>
    </location>
</feature>
<feature type="chain" id="PRO_0000071043" description="DnaJ homolog subfamily C member 1">
    <location>
        <begin position="44"/>
        <end position="552"/>
    </location>
</feature>
<feature type="topological domain" description="Lumenal" evidence="1">
    <location>
        <begin position="44"/>
        <end position="149"/>
    </location>
</feature>
<feature type="transmembrane region" description="Helical" evidence="3">
    <location>
        <begin position="150"/>
        <end position="170"/>
    </location>
</feature>
<feature type="topological domain" description="Cytoplasmic" evidence="1">
    <location>
        <begin position="171"/>
        <end position="552"/>
    </location>
</feature>
<feature type="domain" description="J" evidence="4">
    <location>
        <begin position="56"/>
        <end position="129"/>
    </location>
</feature>
<feature type="domain" description="SANT 1" evidence="5">
    <location>
        <begin position="323"/>
        <end position="377"/>
    </location>
</feature>
<feature type="domain" description="SANT 2" evidence="5">
    <location>
        <begin position="490"/>
        <end position="545"/>
    </location>
</feature>
<feature type="region of interest" description="Disordered" evidence="6">
    <location>
        <begin position="370"/>
        <end position="495"/>
    </location>
</feature>
<feature type="compositionally biased region" description="Acidic residues" evidence="6">
    <location>
        <begin position="419"/>
        <end position="431"/>
    </location>
</feature>
<feature type="compositionally biased region" description="Basic and acidic residues" evidence="6">
    <location>
        <begin position="453"/>
        <end position="470"/>
    </location>
</feature>
<feature type="compositionally biased region" description="Basic and acidic residues" evidence="6">
    <location>
        <begin position="480"/>
        <end position="492"/>
    </location>
</feature>
<feature type="modified residue" description="Phosphoserine" evidence="2">
    <location>
        <position position="379"/>
    </location>
</feature>
<feature type="modified residue" description="Phosphoserine" evidence="7 8">
    <location>
        <position position="477"/>
    </location>
</feature>
<feature type="modified residue" description="Phosphoserine" evidence="7 8">
    <location>
        <position position="478"/>
    </location>
</feature>
<dbReference type="EMBL" id="L16953">
    <property type="protein sequence ID" value="AAA66349.1"/>
    <property type="molecule type" value="mRNA"/>
</dbReference>
<dbReference type="EMBL" id="BC080300">
    <property type="status" value="NOT_ANNOTATED_CDS"/>
    <property type="molecule type" value="mRNA"/>
</dbReference>
<dbReference type="CCDS" id="CCDS15709.1"/>
<dbReference type="PIR" id="JC4030">
    <property type="entry name" value="JC4030"/>
</dbReference>
<dbReference type="RefSeq" id="NP_001177746.1">
    <property type="nucleotide sequence ID" value="NM_001190817.2"/>
</dbReference>
<dbReference type="RefSeq" id="NP_031895.1">
    <property type="nucleotide sequence ID" value="NM_007869.4"/>
</dbReference>
<dbReference type="SMR" id="Q61712"/>
<dbReference type="BioGRID" id="199250">
    <property type="interactions" value="5"/>
</dbReference>
<dbReference type="DIP" id="DIP-60498N"/>
<dbReference type="FunCoup" id="Q61712">
    <property type="interactions" value="3235"/>
</dbReference>
<dbReference type="IntAct" id="Q61712">
    <property type="interactions" value="1"/>
</dbReference>
<dbReference type="STRING" id="10090.ENSMUSP00000126321"/>
<dbReference type="GlyGen" id="Q61712">
    <property type="glycosylation" value="1 site"/>
</dbReference>
<dbReference type="iPTMnet" id="Q61712"/>
<dbReference type="PhosphoSitePlus" id="Q61712"/>
<dbReference type="jPOST" id="Q61712"/>
<dbReference type="PaxDb" id="10090-ENSMUSP00000126321"/>
<dbReference type="PeptideAtlas" id="Q61712"/>
<dbReference type="ProteomicsDB" id="279459"/>
<dbReference type="Pumba" id="Q61712"/>
<dbReference type="Antibodypedia" id="2466">
    <property type="antibodies" value="88 antibodies from 23 providers"/>
</dbReference>
<dbReference type="DNASU" id="13418"/>
<dbReference type="Ensembl" id="ENSMUST00000091418.12">
    <property type="protein sequence ID" value="ENSMUSP00000088980.6"/>
    <property type="gene ID" value="ENSMUSG00000026740.13"/>
</dbReference>
<dbReference type="Ensembl" id="ENSMUST00000166495.8">
    <property type="protein sequence ID" value="ENSMUSP00000126321.2"/>
    <property type="gene ID" value="ENSMUSG00000026740.13"/>
</dbReference>
<dbReference type="GeneID" id="13418"/>
<dbReference type="KEGG" id="mmu:13418"/>
<dbReference type="UCSC" id="uc008ilt.2">
    <property type="organism name" value="mouse"/>
</dbReference>
<dbReference type="AGR" id="MGI:103268"/>
<dbReference type="CTD" id="64215"/>
<dbReference type="MGI" id="MGI:103268">
    <property type="gene designation" value="Dnajc1"/>
</dbReference>
<dbReference type="VEuPathDB" id="HostDB:ENSMUSG00000026740"/>
<dbReference type="eggNOG" id="KOG0724">
    <property type="taxonomic scope" value="Eukaryota"/>
</dbReference>
<dbReference type="GeneTree" id="ENSGT00940000156678"/>
<dbReference type="HOGENOM" id="CLU_036945_2_0_1"/>
<dbReference type="InParanoid" id="Q61712"/>
<dbReference type="OMA" id="AAYWERK"/>
<dbReference type="OrthoDB" id="1420887at2759"/>
<dbReference type="PhylomeDB" id="Q61712"/>
<dbReference type="TreeFam" id="TF105161"/>
<dbReference type="BioGRID-ORCS" id="13418">
    <property type="hits" value="0 hits in 82 CRISPR screens"/>
</dbReference>
<dbReference type="ChiTaRS" id="Dnajc1">
    <property type="organism name" value="mouse"/>
</dbReference>
<dbReference type="PRO" id="PR:Q61712"/>
<dbReference type="Proteomes" id="UP000000589">
    <property type="component" value="Chromosome 2"/>
</dbReference>
<dbReference type="RNAct" id="Q61712">
    <property type="molecule type" value="protein"/>
</dbReference>
<dbReference type="Bgee" id="ENSMUSG00000026740">
    <property type="expression patterns" value="Expressed in lacrimal gland and 260 other cell types or tissues"/>
</dbReference>
<dbReference type="ExpressionAtlas" id="Q61712">
    <property type="expression patterns" value="baseline and differential"/>
</dbReference>
<dbReference type="GO" id="GO:0005783">
    <property type="term" value="C:endoplasmic reticulum"/>
    <property type="evidence" value="ECO:0000314"/>
    <property type="project" value="MGI"/>
</dbReference>
<dbReference type="GO" id="GO:0005788">
    <property type="term" value="C:endoplasmic reticulum lumen"/>
    <property type="evidence" value="ECO:0000304"/>
    <property type="project" value="UniProtKB"/>
</dbReference>
<dbReference type="GO" id="GO:0005789">
    <property type="term" value="C:endoplasmic reticulum membrane"/>
    <property type="evidence" value="ECO:0007669"/>
    <property type="project" value="UniProtKB-SubCell"/>
</dbReference>
<dbReference type="GO" id="GO:0016020">
    <property type="term" value="C:membrane"/>
    <property type="evidence" value="ECO:0000304"/>
    <property type="project" value="UniProtKB"/>
</dbReference>
<dbReference type="GO" id="GO:0031965">
    <property type="term" value="C:nuclear membrane"/>
    <property type="evidence" value="ECO:0007669"/>
    <property type="project" value="UniProtKB-SubCell"/>
</dbReference>
<dbReference type="GO" id="GO:0005634">
    <property type="term" value="C:nucleus"/>
    <property type="evidence" value="ECO:0000304"/>
    <property type="project" value="UniProtKB"/>
</dbReference>
<dbReference type="GO" id="GO:0005886">
    <property type="term" value="C:plasma membrane"/>
    <property type="evidence" value="ECO:0000314"/>
    <property type="project" value="MGI"/>
</dbReference>
<dbReference type="GO" id="GO:0003677">
    <property type="term" value="F:DNA binding"/>
    <property type="evidence" value="ECO:0007669"/>
    <property type="project" value="UniProtKB-KW"/>
</dbReference>
<dbReference type="GO" id="GO:0051087">
    <property type="term" value="F:protein-folding chaperone binding"/>
    <property type="evidence" value="ECO:0000314"/>
    <property type="project" value="MGI"/>
</dbReference>
<dbReference type="GO" id="GO:0043022">
    <property type="term" value="F:ribosome binding"/>
    <property type="evidence" value="ECO:0000304"/>
    <property type="project" value="UniProtKB"/>
</dbReference>
<dbReference type="GO" id="GO:0006457">
    <property type="term" value="P:protein folding"/>
    <property type="evidence" value="ECO:0000314"/>
    <property type="project" value="MGI"/>
</dbReference>
<dbReference type="GO" id="GO:0050708">
    <property type="term" value="P:regulation of protein secretion"/>
    <property type="evidence" value="ECO:0000250"/>
    <property type="project" value="UniProtKB"/>
</dbReference>
<dbReference type="GO" id="GO:0006417">
    <property type="term" value="P:regulation of translation"/>
    <property type="evidence" value="ECO:0000314"/>
    <property type="project" value="MGI"/>
</dbReference>
<dbReference type="CDD" id="cd06257">
    <property type="entry name" value="DnaJ"/>
    <property type="match status" value="1"/>
</dbReference>
<dbReference type="CDD" id="cd00167">
    <property type="entry name" value="SANT"/>
    <property type="match status" value="2"/>
</dbReference>
<dbReference type="FunFam" id="1.10.287.110:FF:000044">
    <property type="entry name" value="DnaJ (Hsp40) homolog, subfamily C, member 1"/>
    <property type="match status" value="1"/>
</dbReference>
<dbReference type="FunFam" id="1.10.10.60:FF:000180">
    <property type="entry name" value="DnaJ (Hsp40) homolog, subfamily C, member 2"/>
    <property type="match status" value="1"/>
</dbReference>
<dbReference type="Gene3D" id="1.10.287.110">
    <property type="entry name" value="DnaJ domain"/>
    <property type="match status" value="1"/>
</dbReference>
<dbReference type="Gene3D" id="1.10.10.60">
    <property type="entry name" value="Homeodomain-like"/>
    <property type="match status" value="2"/>
</dbReference>
<dbReference type="InterPro" id="IPR001623">
    <property type="entry name" value="DnaJ_domain"/>
</dbReference>
<dbReference type="InterPro" id="IPR018253">
    <property type="entry name" value="DnaJ_domain_CS"/>
</dbReference>
<dbReference type="InterPro" id="IPR052606">
    <property type="entry name" value="DnaJ_domain_protein"/>
</dbReference>
<dbReference type="InterPro" id="IPR009057">
    <property type="entry name" value="Homeodomain-like_sf"/>
</dbReference>
<dbReference type="InterPro" id="IPR036869">
    <property type="entry name" value="J_dom_sf"/>
</dbReference>
<dbReference type="InterPro" id="IPR001005">
    <property type="entry name" value="SANT/Myb"/>
</dbReference>
<dbReference type="InterPro" id="IPR017884">
    <property type="entry name" value="SANT_dom"/>
</dbReference>
<dbReference type="PANTHER" id="PTHR44653">
    <property type="entry name" value="DNAJ HOMOLOG SUBFAMILY C MEMBER 1"/>
    <property type="match status" value="1"/>
</dbReference>
<dbReference type="PANTHER" id="PTHR44653:SF2">
    <property type="entry name" value="DNAJ HOMOLOG SUBFAMILY C MEMBER 1"/>
    <property type="match status" value="1"/>
</dbReference>
<dbReference type="Pfam" id="PF00226">
    <property type="entry name" value="DnaJ"/>
    <property type="match status" value="1"/>
</dbReference>
<dbReference type="Pfam" id="PF00249">
    <property type="entry name" value="Myb_DNA-binding"/>
    <property type="match status" value="1"/>
</dbReference>
<dbReference type="Pfam" id="PF23082">
    <property type="entry name" value="Myb_DNA-binding_2"/>
    <property type="match status" value="1"/>
</dbReference>
<dbReference type="PRINTS" id="PR00625">
    <property type="entry name" value="JDOMAIN"/>
</dbReference>
<dbReference type="SMART" id="SM00271">
    <property type="entry name" value="DnaJ"/>
    <property type="match status" value="1"/>
</dbReference>
<dbReference type="SMART" id="SM00717">
    <property type="entry name" value="SANT"/>
    <property type="match status" value="2"/>
</dbReference>
<dbReference type="SUPFAM" id="SSF46565">
    <property type="entry name" value="Chaperone J-domain"/>
    <property type="match status" value="1"/>
</dbReference>
<dbReference type="SUPFAM" id="SSF46689">
    <property type="entry name" value="Homeodomain-like"/>
    <property type="match status" value="2"/>
</dbReference>
<dbReference type="PROSITE" id="PS00636">
    <property type="entry name" value="DNAJ_1"/>
    <property type="match status" value="1"/>
</dbReference>
<dbReference type="PROSITE" id="PS50076">
    <property type="entry name" value="DNAJ_2"/>
    <property type="match status" value="1"/>
</dbReference>
<dbReference type="PROSITE" id="PS51293">
    <property type="entry name" value="SANT"/>
    <property type="match status" value="1"/>
</dbReference>
<reference key="1">
    <citation type="journal article" date="1995" name="Gene">
        <title>Isolation of a mouse cDNA encoding MTJ1, a new murine member of the DnaJ family of proteins.</title>
        <authorList>
            <person name="Brightman S.E."/>
            <person name="Blatch G.L."/>
            <person name="Zetter B.R."/>
        </authorList>
    </citation>
    <scope>NUCLEOTIDE SEQUENCE [MRNA]</scope>
    <source>
        <strain>C57BL/6J</strain>
        <tissue>Lung carcinoma</tissue>
    </source>
</reference>
<reference key="2">
    <citation type="journal article" date="2004" name="Genome Res.">
        <title>The status, quality, and expansion of the NIH full-length cDNA project: the Mammalian Gene Collection (MGC).</title>
        <authorList>
            <consortium name="The MGC Project Team"/>
        </authorList>
    </citation>
    <scope>NUCLEOTIDE SEQUENCE [LARGE SCALE MRNA]</scope>
    <source>
        <strain>C57BL/6J</strain>
        <tissue>Brain</tissue>
    </source>
</reference>
<reference key="3">
    <citation type="journal article" date="2007" name="Proc. Natl. Acad. Sci. U.S.A.">
        <title>Large-scale phosphorylation analysis of mouse liver.</title>
        <authorList>
            <person name="Villen J."/>
            <person name="Beausoleil S.A."/>
            <person name="Gerber S.A."/>
            <person name="Gygi S.P."/>
        </authorList>
    </citation>
    <scope>PHOSPHORYLATION [LARGE SCALE ANALYSIS] AT SER-477 AND SER-478</scope>
    <scope>IDENTIFICATION BY MASS SPECTROMETRY [LARGE SCALE ANALYSIS]</scope>
    <source>
        <tissue>Liver</tissue>
    </source>
</reference>
<reference key="4">
    <citation type="journal article" date="2010" name="Cell">
        <title>A tissue-specific atlas of mouse protein phosphorylation and expression.</title>
        <authorList>
            <person name="Huttlin E.L."/>
            <person name="Jedrychowski M.P."/>
            <person name="Elias J.E."/>
            <person name="Goswami T."/>
            <person name="Rad R."/>
            <person name="Beausoleil S.A."/>
            <person name="Villen J."/>
            <person name="Haas W."/>
            <person name="Sowa M.E."/>
            <person name="Gygi S.P."/>
        </authorList>
    </citation>
    <scope>PHOSPHORYLATION [LARGE SCALE ANALYSIS] AT SER-477 AND SER-478</scope>
    <scope>IDENTIFICATION BY MASS SPECTROMETRY [LARGE SCALE ANALYSIS]</scope>
    <source>
        <tissue>Kidney</tissue>
        <tissue>Liver</tissue>
        <tissue>Lung</tissue>
        <tissue>Pancreas</tissue>
        <tissue>Spleen</tissue>
        <tissue>Testis</tissue>
    </source>
</reference>
<sequence length="552" mass="63870">MWVPGFGSARLPQRRRSGLESSSVRPLWLLLLFLLAAVRPVRAWESGDLELFDLVEEVQLNFYEFLGVQQDASSADIRKAYRKLSLTLHPDKNKDENAETQFRQLVAIYEVLKDDERRQRYDDVLINGLPDWRQPVFYYRRVRKMSNAELALLLFIILTVGHYAVVWSIYLEKQLDELLGRKKRERKKKTGSKSVDAAKLGASEKNERLLIKPQWHDLLPCKLGIWFCLTLKALPHLIQDAGQFYAKYKETKLKEKEDALARIEIETLQKQKKVKVKKPKPEFPVYMPLENTYIQSYDHGTSIEEIEEQMDDWLENRKRTQKRQAPEWTEEDLSQLTRSMVKFPGGTPGRWDKIAHELGRSVTDVTTKAKELKDSVTSSPGMTRLSELKSNGQNSRPIKIATALPDDIITQREDSAGAMEDEEHEAAEGEQESATTEARPRRRKSARAAEAVTRVEPEEKLRGKRQKDFDISEQNDSSDEEKQRKERTRAAEEAWTQSQQKLLELALQQYPKGASDRWDKIAKCVPSKSKEDCIARYKLLVELVQKKKQAKS</sequence>
<protein>
    <recommendedName>
        <fullName>DnaJ homolog subfamily C member 1</fullName>
    </recommendedName>
    <alternativeName>
        <fullName>DnaJ protein homolog MTJ1</fullName>
    </alternativeName>
</protein>
<comment type="function">
    <text evidence="1">May modulate protein synthesis.</text>
</comment>
<comment type="subunit">
    <text evidence="1">Interacts (via J domain) with HSPA5. Interacts (via cytosolic domain) with ribosomes. Interacts (via SANT 2 domain) with SERPINA3; the interaction delays the formation of the covalent inhibitory complex SERPINA3-chymotrypsin, but does not alter the catalytic activity of SERPINA3. Interacts (via SANT 2 domain) with ITIH4 (via C-terminus); the interaction protects ITIH4 against in vitro cleavage by kallikrein (By similarity).</text>
</comment>
<comment type="subcellular location">
    <subcellularLocation>
        <location>Endoplasmic reticulum membrane</location>
        <topology>Single-pass type I membrane protein</topology>
    </subcellularLocation>
    <subcellularLocation>
        <location>Nucleus membrane</location>
        <topology>Single-pass type I membrane protein</topology>
    </subcellularLocation>
    <subcellularLocation>
        <location>Microsome membrane</location>
        <topology>Single-pass type I membrane protein</topology>
    </subcellularLocation>
</comment>
<comment type="tissue specificity">
    <text>Widely expressed.</text>
</comment>
<proteinExistence type="evidence at protein level"/>
<gene>
    <name type="primary">Dnajc1</name>
    <name type="synonym">Dnajl1</name>
    <name type="synonym">Mtj1</name>
</gene>
<keyword id="KW-0143">Chaperone</keyword>
<keyword id="KW-0238">DNA-binding</keyword>
<keyword id="KW-0256">Endoplasmic reticulum</keyword>
<keyword id="KW-0472">Membrane</keyword>
<keyword id="KW-0492">Microsome</keyword>
<keyword id="KW-0539">Nucleus</keyword>
<keyword id="KW-0597">Phosphoprotein</keyword>
<keyword id="KW-1185">Reference proteome</keyword>
<keyword id="KW-0677">Repeat</keyword>
<keyword id="KW-0732">Signal</keyword>
<keyword id="KW-0812">Transmembrane</keyword>
<keyword id="KW-1133">Transmembrane helix</keyword>
<evidence type="ECO:0000250" key="1"/>
<evidence type="ECO:0000250" key="2">
    <source>
        <dbReference type="UniProtKB" id="Q96KC8"/>
    </source>
</evidence>
<evidence type="ECO:0000255" key="3"/>
<evidence type="ECO:0000255" key="4">
    <source>
        <dbReference type="PROSITE-ProRule" id="PRU00286"/>
    </source>
</evidence>
<evidence type="ECO:0000255" key="5">
    <source>
        <dbReference type="PROSITE-ProRule" id="PRU00624"/>
    </source>
</evidence>
<evidence type="ECO:0000256" key="6">
    <source>
        <dbReference type="SAM" id="MobiDB-lite"/>
    </source>
</evidence>
<evidence type="ECO:0007744" key="7">
    <source>
    </source>
</evidence>
<evidence type="ECO:0007744" key="8">
    <source>
    </source>
</evidence>
<organism>
    <name type="scientific">Mus musculus</name>
    <name type="common">Mouse</name>
    <dbReference type="NCBI Taxonomy" id="10090"/>
    <lineage>
        <taxon>Eukaryota</taxon>
        <taxon>Metazoa</taxon>
        <taxon>Chordata</taxon>
        <taxon>Craniata</taxon>
        <taxon>Vertebrata</taxon>
        <taxon>Euteleostomi</taxon>
        <taxon>Mammalia</taxon>
        <taxon>Eutheria</taxon>
        <taxon>Euarchontoglires</taxon>
        <taxon>Glires</taxon>
        <taxon>Rodentia</taxon>
        <taxon>Myomorpha</taxon>
        <taxon>Muroidea</taxon>
        <taxon>Muridae</taxon>
        <taxon>Murinae</taxon>
        <taxon>Mus</taxon>
        <taxon>Mus</taxon>
    </lineage>
</organism>